<proteinExistence type="inferred from homology"/>
<reference evidence="5" key="1">
    <citation type="journal article" date="2002" name="Nature">
        <title>The genome sequence of Schizosaccharomyces pombe.</title>
        <authorList>
            <person name="Wood V."/>
            <person name="Gwilliam R."/>
            <person name="Rajandream M.A."/>
            <person name="Lyne M.H."/>
            <person name="Lyne R."/>
            <person name="Stewart A."/>
            <person name="Sgouros J.G."/>
            <person name="Peat N."/>
            <person name="Hayles J."/>
            <person name="Baker S.G."/>
            <person name="Basham D."/>
            <person name="Bowman S."/>
            <person name="Brooks K."/>
            <person name="Brown D."/>
            <person name="Brown S."/>
            <person name="Chillingworth T."/>
            <person name="Churcher C.M."/>
            <person name="Collins M."/>
            <person name="Connor R."/>
            <person name="Cronin A."/>
            <person name="Davis P."/>
            <person name="Feltwell T."/>
            <person name="Fraser A."/>
            <person name="Gentles S."/>
            <person name="Goble A."/>
            <person name="Hamlin N."/>
            <person name="Harris D.E."/>
            <person name="Hidalgo J."/>
            <person name="Hodgson G."/>
            <person name="Holroyd S."/>
            <person name="Hornsby T."/>
            <person name="Howarth S."/>
            <person name="Huckle E.J."/>
            <person name="Hunt S."/>
            <person name="Jagels K."/>
            <person name="James K.D."/>
            <person name="Jones L."/>
            <person name="Jones M."/>
            <person name="Leather S."/>
            <person name="McDonald S."/>
            <person name="McLean J."/>
            <person name="Mooney P."/>
            <person name="Moule S."/>
            <person name="Mungall K.L."/>
            <person name="Murphy L.D."/>
            <person name="Niblett D."/>
            <person name="Odell C."/>
            <person name="Oliver K."/>
            <person name="O'Neil S."/>
            <person name="Pearson D."/>
            <person name="Quail M.A."/>
            <person name="Rabbinowitsch E."/>
            <person name="Rutherford K.M."/>
            <person name="Rutter S."/>
            <person name="Saunders D."/>
            <person name="Seeger K."/>
            <person name="Sharp S."/>
            <person name="Skelton J."/>
            <person name="Simmonds M.N."/>
            <person name="Squares R."/>
            <person name="Squares S."/>
            <person name="Stevens K."/>
            <person name="Taylor K."/>
            <person name="Taylor R.G."/>
            <person name="Tivey A."/>
            <person name="Walsh S.V."/>
            <person name="Warren T."/>
            <person name="Whitehead S."/>
            <person name="Woodward J.R."/>
            <person name="Volckaert G."/>
            <person name="Aert R."/>
            <person name="Robben J."/>
            <person name="Grymonprez B."/>
            <person name="Weltjens I."/>
            <person name="Vanstreels E."/>
            <person name="Rieger M."/>
            <person name="Schaefer M."/>
            <person name="Mueller-Auer S."/>
            <person name="Gabel C."/>
            <person name="Fuchs M."/>
            <person name="Duesterhoeft A."/>
            <person name="Fritzc C."/>
            <person name="Holzer E."/>
            <person name="Moestl D."/>
            <person name="Hilbert H."/>
            <person name="Borzym K."/>
            <person name="Langer I."/>
            <person name="Beck A."/>
            <person name="Lehrach H."/>
            <person name="Reinhardt R."/>
            <person name="Pohl T.M."/>
            <person name="Eger P."/>
            <person name="Zimmermann W."/>
            <person name="Wedler H."/>
            <person name="Wambutt R."/>
            <person name="Purnelle B."/>
            <person name="Goffeau A."/>
            <person name="Cadieu E."/>
            <person name="Dreano S."/>
            <person name="Gloux S."/>
            <person name="Lelaure V."/>
            <person name="Mottier S."/>
            <person name="Galibert F."/>
            <person name="Aves S.J."/>
            <person name="Xiang Z."/>
            <person name="Hunt C."/>
            <person name="Moore K."/>
            <person name="Hurst S.M."/>
            <person name="Lucas M."/>
            <person name="Rochet M."/>
            <person name="Gaillardin C."/>
            <person name="Tallada V.A."/>
            <person name="Garzon A."/>
            <person name="Thode G."/>
            <person name="Daga R.R."/>
            <person name="Cruzado L."/>
            <person name="Jimenez J."/>
            <person name="Sanchez M."/>
            <person name="del Rey F."/>
            <person name="Benito J."/>
            <person name="Dominguez A."/>
            <person name="Revuelta J.L."/>
            <person name="Moreno S."/>
            <person name="Armstrong J."/>
            <person name="Forsburg S.L."/>
            <person name="Cerutti L."/>
            <person name="Lowe T."/>
            <person name="McCombie W.R."/>
            <person name="Paulsen I."/>
            <person name="Potashkin J."/>
            <person name="Shpakovski G.V."/>
            <person name="Ussery D."/>
            <person name="Barrell B.G."/>
            <person name="Nurse P."/>
        </authorList>
    </citation>
    <scope>NUCLEOTIDE SEQUENCE [LARGE SCALE GENOMIC DNA]</scope>
    <source>
        <strain>972 / ATCC 24843</strain>
    </source>
</reference>
<reference evidence="4" key="2">
    <citation type="journal article" date="2006" name="Nat. Biotechnol.">
        <title>ORFeome cloning and global analysis of protein localization in the fission yeast Schizosaccharomyces pombe.</title>
        <authorList>
            <person name="Matsuyama A."/>
            <person name="Arai R."/>
            <person name="Yashiroda Y."/>
            <person name="Shirai A."/>
            <person name="Kamata A."/>
            <person name="Sekido S."/>
            <person name="Kobayashi Y."/>
            <person name="Hashimoto A."/>
            <person name="Hamamoto M."/>
            <person name="Hiraoka Y."/>
            <person name="Horinouchi S."/>
            <person name="Yoshida M."/>
        </authorList>
    </citation>
    <scope>SUBCELLULAR LOCATION [LARGE SCALE ANALYSIS]</scope>
</reference>
<keyword id="KW-0963">Cytoplasm</keyword>
<keyword id="KW-0343">GTPase activation</keyword>
<keyword id="KW-0539">Nucleus</keyword>
<keyword id="KW-1185">Reference proteome</keyword>
<name>GYP7_SCHPO</name>
<protein>
    <recommendedName>
        <fullName>GTPase-activating protein gyp7</fullName>
    </recommendedName>
    <alternativeName>
        <fullName>GAP for ypt7</fullName>
    </alternativeName>
</protein>
<sequence>MTTLESLDMPEMTEVEDDTVDIHIDNSKVALLFSKSKVFVHPTSKMKDNISGYLSLSKSKALGNSSVAGSDILLSWVPDSFLKNRPRDLSVFQNAETLSNGSIREWVEIPQHLDYSFSVRLCSIYSIIFRPPRYGWNYGSIVINLRDSGESLPPLFFHDDECISTIEYGKQITRDRFDPFDESGNMFWGGTHLLMQLKKYASLEQSSHESQLYLVNPSPEDTVAFQSVELQKVISNNRLNSSSTPPTPRSSSSIFNPFRRALHDLSFTVLERFSRVTNYGKSEVDRLMEHKVTKSILPHLPRELQVLLESKRVQKLTEEYDPARMFLARWAEGIVEQSESNNSQPVNNAGVWTDAQREEDSSLGPFELVYIEERVKRDDPLSVEQWNSMFNAHGKLQVDVHRVLGIIFHGGIQPSLRKEVWPFLLSVYPWDSTSEERRVIYLSLQEEYCTLKRKWYEDIHKQFNDRWFIEQRNRIEKDVHRTDRQHEYFQIEDLPHPDPQSTFTGTNMNMEMMKDILLTYNEYDTELGYVQGMSDLLAPIYVTFNDNALTFWGMVGLMKRLHFNFLRDQSGMHRQLDTLRLLIEFMDPELFAHLEKTDSSNLFCFFRMLLIYFKREFDWEVLLKLWDVLFTNYLSYDYHIFVAYAIAERHREVLLNQTSAFDEVLKYFNELSGKLALEPTLICAEQCFYQFKNKLALIDRKQMEETNSDEDGSKETDLPTIAPYLRNLLKTSQPQYTPSGKQE</sequence>
<organism>
    <name type="scientific">Schizosaccharomyces pombe (strain 972 / ATCC 24843)</name>
    <name type="common">Fission yeast</name>
    <dbReference type="NCBI Taxonomy" id="284812"/>
    <lineage>
        <taxon>Eukaryota</taxon>
        <taxon>Fungi</taxon>
        <taxon>Dikarya</taxon>
        <taxon>Ascomycota</taxon>
        <taxon>Taphrinomycotina</taxon>
        <taxon>Schizosaccharomycetes</taxon>
        <taxon>Schizosaccharomycetales</taxon>
        <taxon>Schizosaccharomycetaceae</taxon>
        <taxon>Schizosaccharomyces</taxon>
    </lineage>
</organism>
<gene>
    <name evidence="5" type="primary">gyp7</name>
    <name type="ORF">SPAC630.05</name>
</gene>
<evidence type="ECO:0000250" key="1">
    <source>
        <dbReference type="UniProtKB" id="P48365"/>
    </source>
</evidence>
<evidence type="ECO:0000255" key="2">
    <source>
        <dbReference type="PROSITE-ProRule" id="PRU00163"/>
    </source>
</evidence>
<evidence type="ECO:0000269" key="3">
    <source>
    </source>
</evidence>
<evidence type="ECO:0000305" key="4"/>
<evidence type="ECO:0000312" key="5">
    <source>
        <dbReference type="EMBL" id="CAB52727.1"/>
    </source>
</evidence>
<dbReference type="EMBL" id="CU329670">
    <property type="protein sequence ID" value="CAB52727.1"/>
    <property type="molecule type" value="Genomic_DNA"/>
</dbReference>
<dbReference type="PIR" id="T38983">
    <property type="entry name" value="T38983"/>
</dbReference>
<dbReference type="RefSeq" id="NP_592900.1">
    <property type="nucleotide sequence ID" value="NM_001018300.2"/>
</dbReference>
<dbReference type="SMR" id="Q9UUH7"/>
<dbReference type="BioGRID" id="280023">
    <property type="interactions" value="11"/>
</dbReference>
<dbReference type="FunCoup" id="Q9UUH7">
    <property type="interactions" value="277"/>
</dbReference>
<dbReference type="STRING" id="284812.Q9UUH7"/>
<dbReference type="iPTMnet" id="Q9UUH7"/>
<dbReference type="PaxDb" id="4896-SPAC630.05.1"/>
<dbReference type="EnsemblFungi" id="SPAC630.05.1">
    <property type="protein sequence ID" value="SPAC630.05.1:pep"/>
    <property type="gene ID" value="SPAC630.05"/>
</dbReference>
<dbReference type="GeneID" id="2543609"/>
<dbReference type="KEGG" id="spo:2543609"/>
<dbReference type="PomBase" id="SPAC630.05">
    <property type="gene designation" value="gyp7"/>
</dbReference>
<dbReference type="VEuPathDB" id="FungiDB:SPAC630.05"/>
<dbReference type="eggNOG" id="KOG2197">
    <property type="taxonomic scope" value="Eukaryota"/>
</dbReference>
<dbReference type="HOGENOM" id="CLU_004457_0_1_1"/>
<dbReference type="InParanoid" id="Q9UUH7"/>
<dbReference type="OMA" id="WWREQRG"/>
<dbReference type="PhylomeDB" id="Q9UUH7"/>
<dbReference type="Reactome" id="R-SPO-8854214">
    <property type="pathway name" value="TBC/RABGAPs"/>
</dbReference>
<dbReference type="PRO" id="PR:Q9UUH7"/>
<dbReference type="Proteomes" id="UP000002485">
    <property type="component" value="Chromosome I"/>
</dbReference>
<dbReference type="GO" id="GO:0005829">
    <property type="term" value="C:cytosol"/>
    <property type="evidence" value="ECO:0007005"/>
    <property type="project" value="PomBase"/>
</dbReference>
<dbReference type="GO" id="GO:0005634">
    <property type="term" value="C:nucleus"/>
    <property type="evidence" value="ECO:0007005"/>
    <property type="project" value="PomBase"/>
</dbReference>
<dbReference type="GO" id="GO:0005096">
    <property type="term" value="F:GTPase activator activity"/>
    <property type="evidence" value="ECO:0000318"/>
    <property type="project" value="GO_Central"/>
</dbReference>
<dbReference type="GO" id="GO:0016192">
    <property type="term" value="P:vesicle-mediated transport"/>
    <property type="evidence" value="ECO:0000266"/>
    <property type="project" value="PomBase"/>
</dbReference>
<dbReference type="Gene3D" id="2.30.29.230">
    <property type="match status" value="1"/>
</dbReference>
<dbReference type="Gene3D" id="1.10.8.270">
    <property type="entry name" value="putative rabgap domain of human tbc1 domain family member 14 like domains"/>
    <property type="match status" value="1"/>
</dbReference>
<dbReference type="Gene3D" id="1.10.472.80">
    <property type="entry name" value="Ypt/Rab-GAP domain of gyp1p, domain 3"/>
    <property type="match status" value="1"/>
</dbReference>
<dbReference type="InterPro" id="IPR000195">
    <property type="entry name" value="Rab-GAP-TBC_dom"/>
</dbReference>
<dbReference type="InterPro" id="IPR035969">
    <property type="entry name" value="Rab-GAP_TBC_sf"/>
</dbReference>
<dbReference type="InterPro" id="IPR021935">
    <property type="entry name" value="SGSM1/2_RBD"/>
</dbReference>
<dbReference type="PANTHER" id="PTHR22957:SF502">
    <property type="entry name" value="SMALL G PROTEIN SIGNALING MODULATOR 2-RELATED"/>
    <property type="match status" value="1"/>
</dbReference>
<dbReference type="PANTHER" id="PTHR22957">
    <property type="entry name" value="TBC1 DOMAIN FAMILY MEMBER GTPASE-ACTIVATING PROTEIN"/>
    <property type="match status" value="1"/>
</dbReference>
<dbReference type="Pfam" id="PF12068">
    <property type="entry name" value="PH_RBD"/>
    <property type="match status" value="1"/>
</dbReference>
<dbReference type="Pfam" id="PF00566">
    <property type="entry name" value="RabGAP-TBC"/>
    <property type="match status" value="1"/>
</dbReference>
<dbReference type="SMART" id="SM00164">
    <property type="entry name" value="TBC"/>
    <property type="match status" value="1"/>
</dbReference>
<dbReference type="SUPFAM" id="SSF47923">
    <property type="entry name" value="Ypt/Rab-GAP domain of gyp1p"/>
    <property type="match status" value="2"/>
</dbReference>
<dbReference type="PROSITE" id="PS50086">
    <property type="entry name" value="TBC_RABGAP"/>
    <property type="match status" value="1"/>
</dbReference>
<accession>Q9UUH7</accession>
<comment type="function">
    <text evidence="1">Most effectively accelerates the intrinsic GTPase activity of ypt7.</text>
</comment>
<comment type="subcellular location">
    <subcellularLocation>
        <location evidence="3">Cytoplasm</location>
    </subcellularLocation>
    <subcellularLocation>
        <location evidence="3">Nucleus</location>
    </subcellularLocation>
</comment>
<feature type="chain" id="PRO_0000312838" description="GTPase-activating protein gyp7">
    <location>
        <begin position="1"/>
        <end position="743"/>
    </location>
</feature>
<feature type="domain" description="Rab-GAP TBC" evidence="2">
    <location>
        <begin position="411"/>
        <end position="633"/>
    </location>
</feature>